<evidence type="ECO:0000250" key="1">
    <source>
        <dbReference type="UniProtKB" id="Q05515"/>
    </source>
</evidence>
<evidence type="ECO:0000305" key="2"/>
<protein>
    <recommendedName>
        <fullName evidence="2">Ceramide-binding protein SVF1</fullName>
    </recommendedName>
    <alternativeName>
        <fullName>Survival factor 1</fullName>
    </alternativeName>
</protein>
<reference key="1">
    <citation type="journal article" date="2004" name="Nature">
        <title>Genome evolution in yeasts.</title>
        <authorList>
            <person name="Dujon B."/>
            <person name="Sherman D."/>
            <person name="Fischer G."/>
            <person name="Durrens P."/>
            <person name="Casaregola S."/>
            <person name="Lafontaine I."/>
            <person name="de Montigny J."/>
            <person name="Marck C."/>
            <person name="Neuveglise C."/>
            <person name="Talla E."/>
            <person name="Goffard N."/>
            <person name="Frangeul L."/>
            <person name="Aigle M."/>
            <person name="Anthouard V."/>
            <person name="Babour A."/>
            <person name="Barbe V."/>
            <person name="Barnay S."/>
            <person name="Blanchin S."/>
            <person name="Beckerich J.-M."/>
            <person name="Beyne E."/>
            <person name="Bleykasten C."/>
            <person name="Boisrame A."/>
            <person name="Boyer J."/>
            <person name="Cattolico L."/>
            <person name="Confanioleri F."/>
            <person name="de Daruvar A."/>
            <person name="Despons L."/>
            <person name="Fabre E."/>
            <person name="Fairhead C."/>
            <person name="Ferry-Dumazet H."/>
            <person name="Groppi A."/>
            <person name="Hantraye F."/>
            <person name="Hennequin C."/>
            <person name="Jauniaux N."/>
            <person name="Joyet P."/>
            <person name="Kachouri R."/>
            <person name="Kerrest A."/>
            <person name="Koszul R."/>
            <person name="Lemaire M."/>
            <person name="Lesur I."/>
            <person name="Ma L."/>
            <person name="Muller H."/>
            <person name="Nicaud J.-M."/>
            <person name="Nikolski M."/>
            <person name="Oztas S."/>
            <person name="Ozier-Kalogeropoulos O."/>
            <person name="Pellenz S."/>
            <person name="Potier S."/>
            <person name="Richard G.-F."/>
            <person name="Straub M.-L."/>
            <person name="Suleau A."/>
            <person name="Swennen D."/>
            <person name="Tekaia F."/>
            <person name="Wesolowski-Louvel M."/>
            <person name="Westhof E."/>
            <person name="Wirth B."/>
            <person name="Zeniou-Meyer M."/>
            <person name="Zivanovic Y."/>
            <person name="Bolotin-Fukuhara M."/>
            <person name="Thierry A."/>
            <person name="Bouchier C."/>
            <person name="Caudron B."/>
            <person name="Scarpelli C."/>
            <person name="Gaillardin C."/>
            <person name="Weissenbach J."/>
            <person name="Wincker P."/>
            <person name="Souciet J.-L."/>
        </authorList>
    </citation>
    <scope>NUCLEOTIDE SEQUENCE [LARGE SCALE GENOMIC DNA]</scope>
    <source>
        <strain>ATCC 36239 / CBS 767 / BCRC 21394 / JCM 1990 / NBRC 0083 / IGC 2968</strain>
    </source>
</reference>
<feature type="chain" id="PRO_0000072329" description="Ceramide-binding protein SVF1">
    <location>
        <begin position="1"/>
        <end position="376"/>
    </location>
</feature>
<feature type="region of interest" description="Peripherally associates with membranes" evidence="1">
    <location>
        <begin position="1"/>
        <end position="18"/>
    </location>
</feature>
<accession>Q6BIH2</accession>
<gene>
    <name type="primary">SVF1</name>
    <name type="ordered locus">DEHA2G10428g</name>
</gene>
<name>SVF1_DEBHA</name>
<organism>
    <name type="scientific">Debaryomyces hansenii (strain ATCC 36239 / CBS 767 / BCRC 21394 / JCM 1990 / NBRC 0083 / IGC 2968)</name>
    <name type="common">Yeast</name>
    <name type="synonym">Torulaspora hansenii</name>
    <dbReference type="NCBI Taxonomy" id="284592"/>
    <lineage>
        <taxon>Eukaryota</taxon>
        <taxon>Fungi</taxon>
        <taxon>Dikarya</taxon>
        <taxon>Ascomycota</taxon>
        <taxon>Saccharomycotina</taxon>
        <taxon>Pichiomycetes</taxon>
        <taxon>Debaryomycetaceae</taxon>
        <taxon>Debaryomyces</taxon>
    </lineage>
</organism>
<proteinExistence type="inferred from homology"/>
<keyword id="KW-0963">Cytoplasm</keyword>
<keyword id="KW-0256">Endoplasmic reticulum</keyword>
<keyword id="KW-0333">Golgi apparatus</keyword>
<keyword id="KW-0445">Lipid transport</keyword>
<keyword id="KW-0472">Membrane</keyword>
<keyword id="KW-0539">Nucleus</keyword>
<keyword id="KW-1185">Reference proteome</keyword>
<keyword id="KW-0813">Transport</keyword>
<dbReference type="EMBL" id="CR382139">
    <property type="protein sequence ID" value="CAG90475.2"/>
    <property type="molecule type" value="Genomic_DNA"/>
</dbReference>
<dbReference type="RefSeq" id="XP_461999.2">
    <property type="nucleotide sequence ID" value="XM_461999.1"/>
</dbReference>
<dbReference type="FunCoup" id="Q6BIH2">
    <property type="interactions" value="124"/>
</dbReference>
<dbReference type="STRING" id="284592.Q6BIH2"/>
<dbReference type="GeneID" id="2904897"/>
<dbReference type="KEGG" id="dha:DEHA2G10428g"/>
<dbReference type="VEuPathDB" id="FungiDB:DEHA2G10428g"/>
<dbReference type="eggNOG" id="ENOG502QQY3">
    <property type="taxonomic scope" value="Eukaryota"/>
</dbReference>
<dbReference type="HOGENOM" id="CLU_030205_2_0_1"/>
<dbReference type="InParanoid" id="Q6BIH2"/>
<dbReference type="OMA" id="AFWPRCV"/>
<dbReference type="OrthoDB" id="2590239at2759"/>
<dbReference type="Proteomes" id="UP000000599">
    <property type="component" value="Chromosome G"/>
</dbReference>
<dbReference type="GO" id="GO:0033106">
    <property type="term" value="C:cis-Golgi network membrane"/>
    <property type="evidence" value="ECO:0000250"/>
    <property type="project" value="UniProtKB"/>
</dbReference>
<dbReference type="GO" id="GO:0005737">
    <property type="term" value="C:cytoplasm"/>
    <property type="evidence" value="ECO:0000250"/>
    <property type="project" value="UniProtKB"/>
</dbReference>
<dbReference type="GO" id="GO:0005789">
    <property type="term" value="C:endoplasmic reticulum membrane"/>
    <property type="evidence" value="ECO:0007669"/>
    <property type="project" value="UniProtKB-SubCell"/>
</dbReference>
<dbReference type="GO" id="GO:0005634">
    <property type="term" value="C:nucleus"/>
    <property type="evidence" value="ECO:0007669"/>
    <property type="project" value="UniProtKB-SubCell"/>
</dbReference>
<dbReference type="GO" id="GO:0097001">
    <property type="term" value="F:ceramide binding"/>
    <property type="evidence" value="ECO:0000250"/>
    <property type="project" value="UniProtKB"/>
</dbReference>
<dbReference type="GO" id="GO:0035621">
    <property type="term" value="P:ER to Golgi ceramide transport"/>
    <property type="evidence" value="ECO:0000250"/>
    <property type="project" value="UniProtKB"/>
</dbReference>
<dbReference type="GO" id="GO:0006979">
    <property type="term" value="P:response to oxidative stress"/>
    <property type="evidence" value="ECO:0007669"/>
    <property type="project" value="InterPro"/>
</dbReference>
<dbReference type="InterPro" id="IPR051385">
    <property type="entry name" value="Ceramide-binding_SVF1"/>
</dbReference>
<dbReference type="InterPro" id="IPR033394">
    <property type="entry name" value="Svf1-like_C"/>
</dbReference>
<dbReference type="InterPro" id="IPR013931">
    <property type="entry name" value="Svf1-like_N"/>
</dbReference>
<dbReference type="PANTHER" id="PTHR47107:SF1">
    <property type="entry name" value="CERAMIDE-BINDING PROTEIN SVF1-RELATED"/>
    <property type="match status" value="1"/>
</dbReference>
<dbReference type="PANTHER" id="PTHR47107">
    <property type="entry name" value="SVF1-LIKE PROTEIN YDR222W-RELATED"/>
    <property type="match status" value="1"/>
</dbReference>
<dbReference type="Pfam" id="PF08622">
    <property type="entry name" value="Svf1"/>
    <property type="match status" value="1"/>
</dbReference>
<dbReference type="Pfam" id="PF17187">
    <property type="entry name" value="Svf1_C"/>
    <property type="match status" value="1"/>
</dbReference>
<dbReference type="SUPFAM" id="SSF159245">
    <property type="entry name" value="AttH-like"/>
    <property type="match status" value="1"/>
</dbReference>
<sequence>MLKWVQSGLSAVAGTAEPEYGREAIHPITDTITDKSKCYRETTIEDFGWKQPTSTNVETQTFYFTCLKTGYLGFAQVIHSNVMGVHTTAQFTFRFFNFKGKQEDNLWTSTKLEDFRCEGSNFYANGLSIELDKDNKSYTVKSSVNKDSVVDLTMVKLVPGVIFGDNGTTYYGDDLENPWGSMRHLFWPRCSVSGTVKSGDKVFEIEGYTMFVMALQGMKPHHAAKAWNFLNFQSESHSAVQMEFTTPMSYANTKVNIAILTSNDKILSCSINNEVVHENPEVDETGWPVPKAITFNFDGLSDDNKKVVGKVHGDLITLVERVDVMAEIPQFIKNIATGVSGTKPYIYQFCNDMEIEIDDGVKESGMGFNEATFISE</sequence>
<comment type="function">
    <text evidence="1">Ceramide-binding protein that may transfer ceramides from the endoplasmic reticulum membrane to the cis-Golgi network membrane, and is thereby required for the biosynthesis of complex sphingolipids.</text>
</comment>
<comment type="subcellular location">
    <subcellularLocation>
        <location evidence="1">Golgi apparatus</location>
        <location evidence="1">cis-Golgi network membrane</location>
        <topology evidence="1">Peripheral membrane protein</topology>
    </subcellularLocation>
    <subcellularLocation>
        <location evidence="1">Endoplasmic reticulum membrane</location>
        <topology evidence="1">Peripheral membrane protein</topology>
    </subcellularLocation>
    <subcellularLocation>
        <location evidence="1">Cytoplasm</location>
    </subcellularLocation>
    <subcellularLocation>
        <location evidence="1">Nucleus</location>
    </subcellularLocation>
    <text evidence="1">Localizes to the interface between the cis-Golgi network and endoplasmic reticulum exit sites.</text>
</comment>
<comment type="similarity">
    <text evidence="2">Belongs to the SVF1 family.</text>
</comment>